<organism>
    <name type="scientific">Burkholderia pseudomallei (strain 1710b)</name>
    <dbReference type="NCBI Taxonomy" id="320372"/>
    <lineage>
        <taxon>Bacteria</taxon>
        <taxon>Pseudomonadati</taxon>
        <taxon>Pseudomonadota</taxon>
        <taxon>Betaproteobacteria</taxon>
        <taxon>Burkholderiales</taxon>
        <taxon>Burkholderiaceae</taxon>
        <taxon>Burkholderia</taxon>
        <taxon>pseudomallei group</taxon>
    </lineage>
</organism>
<keyword id="KW-0012">Acyltransferase</keyword>
<keyword id="KW-0963">Cytoplasm</keyword>
<keyword id="KW-0808">Transferase</keyword>
<feature type="chain" id="PRO_0000263177" description="Aspartate/glutamate leucyltransferase">
    <location>
        <begin position="1"/>
        <end position="276"/>
    </location>
</feature>
<comment type="function">
    <text evidence="1">Functions in the N-end rule pathway of protein degradation where it conjugates Leu from its aminoacyl-tRNA to the N-termini of proteins containing an N-terminal aspartate or glutamate.</text>
</comment>
<comment type="catalytic activity">
    <reaction evidence="1">
        <text>N-terminal L-glutamyl-[protein] + L-leucyl-tRNA(Leu) = N-terminal L-leucyl-L-glutamyl-[protein] + tRNA(Leu) + H(+)</text>
        <dbReference type="Rhea" id="RHEA:50412"/>
        <dbReference type="Rhea" id="RHEA-COMP:9613"/>
        <dbReference type="Rhea" id="RHEA-COMP:9622"/>
        <dbReference type="Rhea" id="RHEA-COMP:12664"/>
        <dbReference type="Rhea" id="RHEA-COMP:12668"/>
        <dbReference type="ChEBI" id="CHEBI:15378"/>
        <dbReference type="ChEBI" id="CHEBI:64721"/>
        <dbReference type="ChEBI" id="CHEBI:78442"/>
        <dbReference type="ChEBI" id="CHEBI:78494"/>
        <dbReference type="ChEBI" id="CHEBI:133041"/>
        <dbReference type="EC" id="2.3.2.29"/>
    </reaction>
</comment>
<comment type="catalytic activity">
    <reaction evidence="1">
        <text>N-terminal L-aspartyl-[protein] + L-leucyl-tRNA(Leu) = N-terminal L-leucyl-L-aspartyl-[protein] + tRNA(Leu) + H(+)</text>
        <dbReference type="Rhea" id="RHEA:50420"/>
        <dbReference type="Rhea" id="RHEA-COMP:9613"/>
        <dbReference type="Rhea" id="RHEA-COMP:9622"/>
        <dbReference type="Rhea" id="RHEA-COMP:12669"/>
        <dbReference type="Rhea" id="RHEA-COMP:12674"/>
        <dbReference type="ChEBI" id="CHEBI:15378"/>
        <dbReference type="ChEBI" id="CHEBI:64720"/>
        <dbReference type="ChEBI" id="CHEBI:78442"/>
        <dbReference type="ChEBI" id="CHEBI:78494"/>
        <dbReference type="ChEBI" id="CHEBI:133042"/>
        <dbReference type="EC" id="2.3.2.29"/>
    </reaction>
</comment>
<comment type="subcellular location">
    <subcellularLocation>
        <location evidence="1">Cytoplasm</location>
    </subcellularLocation>
</comment>
<comment type="similarity">
    <text evidence="1">Belongs to the R-transferase family. Bpt subfamily.</text>
</comment>
<gene>
    <name evidence="1" type="primary">bpt</name>
    <name type="ordered locus">BURPS1710b_1979</name>
</gene>
<dbReference type="EC" id="2.3.2.29" evidence="1"/>
<dbReference type="EMBL" id="CP000124">
    <property type="protein sequence ID" value="ABA47995.1"/>
    <property type="molecule type" value="Genomic_DNA"/>
</dbReference>
<dbReference type="RefSeq" id="WP_004192823.1">
    <property type="nucleotide sequence ID" value="NC_007434.1"/>
</dbReference>
<dbReference type="SMR" id="Q3JSS7"/>
<dbReference type="EnsemblBacteria" id="ABA47995">
    <property type="protein sequence ID" value="ABA47995"/>
    <property type="gene ID" value="BURPS1710b_1979"/>
</dbReference>
<dbReference type="KEGG" id="bpm:BURPS1710b_1979"/>
<dbReference type="HOGENOM" id="CLU_077607_0_0_4"/>
<dbReference type="Proteomes" id="UP000002700">
    <property type="component" value="Chromosome I"/>
</dbReference>
<dbReference type="GO" id="GO:0005737">
    <property type="term" value="C:cytoplasm"/>
    <property type="evidence" value="ECO:0007669"/>
    <property type="project" value="UniProtKB-SubCell"/>
</dbReference>
<dbReference type="GO" id="GO:0004057">
    <property type="term" value="F:arginyl-tRNA--protein transferase activity"/>
    <property type="evidence" value="ECO:0007669"/>
    <property type="project" value="InterPro"/>
</dbReference>
<dbReference type="GO" id="GO:0008914">
    <property type="term" value="F:leucyl-tRNA--protein transferase activity"/>
    <property type="evidence" value="ECO:0007669"/>
    <property type="project" value="UniProtKB-UniRule"/>
</dbReference>
<dbReference type="GO" id="GO:0071596">
    <property type="term" value="P:ubiquitin-dependent protein catabolic process via the N-end rule pathway"/>
    <property type="evidence" value="ECO:0007669"/>
    <property type="project" value="InterPro"/>
</dbReference>
<dbReference type="HAMAP" id="MF_00689">
    <property type="entry name" value="Bpt"/>
    <property type="match status" value="1"/>
</dbReference>
<dbReference type="InterPro" id="IPR016181">
    <property type="entry name" value="Acyl_CoA_acyltransferase"/>
</dbReference>
<dbReference type="InterPro" id="IPR017138">
    <property type="entry name" value="Asp_Glu_LeuTrfase"/>
</dbReference>
<dbReference type="InterPro" id="IPR030700">
    <property type="entry name" value="N-end_Aminoacyl_Trfase"/>
</dbReference>
<dbReference type="InterPro" id="IPR007472">
    <property type="entry name" value="N-end_Aminoacyl_Trfase_C"/>
</dbReference>
<dbReference type="InterPro" id="IPR007471">
    <property type="entry name" value="N-end_Aminoacyl_Trfase_N"/>
</dbReference>
<dbReference type="NCBIfam" id="NF002341">
    <property type="entry name" value="PRK01305.1-1"/>
    <property type="match status" value="1"/>
</dbReference>
<dbReference type="NCBIfam" id="NF002342">
    <property type="entry name" value="PRK01305.1-3"/>
    <property type="match status" value="1"/>
</dbReference>
<dbReference type="NCBIfam" id="NF002346">
    <property type="entry name" value="PRK01305.2-3"/>
    <property type="match status" value="1"/>
</dbReference>
<dbReference type="PANTHER" id="PTHR21367">
    <property type="entry name" value="ARGININE-TRNA-PROTEIN TRANSFERASE 1"/>
    <property type="match status" value="1"/>
</dbReference>
<dbReference type="PANTHER" id="PTHR21367:SF1">
    <property type="entry name" value="ARGINYL-TRNA--PROTEIN TRANSFERASE 1"/>
    <property type="match status" value="1"/>
</dbReference>
<dbReference type="Pfam" id="PF04377">
    <property type="entry name" value="ATE_C"/>
    <property type="match status" value="1"/>
</dbReference>
<dbReference type="Pfam" id="PF04376">
    <property type="entry name" value="ATE_N"/>
    <property type="match status" value="1"/>
</dbReference>
<dbReference type="PIRSF" id="PIRSF037208">
    <property type="entry name" value="ATE_pro_prd"/>
    <property type="match status" value="1"/>
</dbReference>
<dbReference type="SUPFAM" id="SSF55729">
    <property type="entry name" value="Acyl-CoA N-acyltransferases (Nat)"/>
    <property type="match status" value="1"/>
</dbReference>
<sequence>MTHPTELPLSPLSALQFYATAPYPCSYLDGRVARSQVATPSHLINSDIYTELVKAGFRRSGVFTYRPYCDGCRACVPVRVPVDAFAPNRTQRRTWKRHRALVATVAALHYDEEHYALYMRYQSARHAGGGMDRDSRDQYEQFLLQSRINSRLVEFRDLDPAENGASTLRMVSMIDILGDGLSSVYTFFDPDESHASYGTYNILWQIEQAKSLRLPYVYLGYWIRESPKMAYKANFHPLEGLVDGRWKVLDPTLADLPPVDAALARAPLPGGHSGTR</sequence>
<accession>Q3JSS7</accession>
<protein>
    <recommendedName>
        <fullName evidence="1">Aspartate/glutamate leucyltransferase</fullName>
        <ecNumber evidence="1">2.3.2.29</ecNumber>
    </recommendedName>
</protein>
<reference key="1">
    <citation type="journal article" date="2010" name="Genome Biol. Evol.">
        <title>Continuing evolution of Burkholderia mallei through genome reduction and large-scale rearrangements.</title>
        <authorList>
            <person name="Losada L."/>
            <person name="Ronning C.M."/>
            <person name="DeShazer D."/>
            <person name="Woods D."/>
            <person name="Fedorova N."/>
            <person name="Kim H.S."/>
            <person name="Shabalina S.A."/>
            <person name="Pearson T.R."/>
            <person name="Brinkac L."/>
            <person name="Tan P."/>
            <person name="Nandi T."/>
            <person name="Crabtree J."/>
            <person name="Badger J."/>
            <person name="Beckstrom-Sternberg S."/>
            <person name="Saqib M."/>
            <person name="Schutzer S.E."/>
            <person name="Keim P."/>
            <person name="Nierman W.C."/>
        </authorList>
    </citation>
    <scope>NUCLEOTIDE SEQUENCE [LARGE SCALE GENOMIC DNA]</scope>
    <source>
        <strain>1710b</strain>
    </source>
</reference>
<proteinExistence type="inferred from homology"/>
<evidence type="ECO:0000255" key="1">
    <source>
        <dbReference type="HAMAP-Rule" id="MF_00689"/>
    </source>
</evidence>
<name>BPT_BURP1</name>